<dbReference type="EMBL" id="KY405008">
    <property type="protein sequence ID" value="AQA27297.1"/>
    <property type="molecule type" value="Genomic_DNA"/>
</dbReference>
<dbReference type="RefSeq" id="YP_009345096.1">
    <property type="nucleotide sequence ID" value="NC_033744.1"/>
</dbReference>
<dbReference type="SMR" id="A0A1P8YT88"/>
<dbReference type="GeneID" id="30999666"/>
<dbReference type="KEGG" id="vg:30999666"/>
<dbReference type="Proteomes" id="UP000214340">
    <property type="component" value="Segment"/>
</dbReference>
<dbReference type="GO" id="GO:0042025">
    <property type="term" value="C:host cell nucleus"/>
    <property type="evidence" value="ECO:0007669"/>
    <property type="project" value="UniProtKB-SubCell"/>
</dbReference>
<dbReference type="GO" id="GO:0044423">
    <property type="term" value="C:virion component"/>
    <property type="evidence" value="ECO:0007669"/>
    <property type="project" value="UniProtKB-KW"/>
</dbReference>
<sequence>MFTALEKVVDTLRLRIFCFSACCNEVNASKKKGKKMSANEIKNQLHVMHDPFSDKTSQPKIPDGKANESLGFATQTVQEVGNAEGANTMHILLFPGQNSGILIDETAQADLGSRTYYIPTFFGSNGLDWDDLADATTAANVRGLDNYALWRVVSTGLQLKLLNPVDQDDGWWESVRVTTENTNVDWYLTTGNNSTQPGGNNGTIAPVGLINSLLSQQTLANEQSYSTGLLRDLHRVQFECHGQRDYHDFIQQRNEIRLAGAAISAVDKTTNYEAQFSLGHDDANDVINQFVDRSYDMVYIRLHCRQNTGTTPFLGSRFHLNCVSNQEVIFDHEERESRFHTRSHTIGSNANSVHMQARRADQNAAKMTM</sequence>
<protein>
    <recommendedName>
        <fullName>Capsid protein</fullName>
    </recommendedName>
</protein>
<proteinExistence type="predicted"/>
<feature type="chain" id="PRO_0000445649" description="Capsid protein">
    <location>
        <begin position="1"/>
        <end position="369"/>
    </location>
</feature>
<comment type="function">
    <text evidence="1">Self-assembles to form the virion icosahedral capsid.</text>
</comment>
<comment type="subcellular location">
    <subcellularLocation>
        <location evidence="1">Host nucleus</location>
    </subcellularLocation>
    <subcellularLocation>
        <location evidence="1">Virion</location>
    </subcellularLocation>
</comment>
<organism>
    <name type="scientific">Avon-Heathcote Estuary associated kieseladnavirus</name>
    <name type="common">AHEaBV</name>
    <name type="synonym">Avon-Heathcote Estuary associated bacilladnavirus</name>
    <dbReference type="NCBI Taxonomy" id="3052270"/>
    <lineage>
        <taxon>Viruses</taxon>
        <taxon>Monodnaviria</taxon>
        <taxon>Shotokuvirae</taxon>
        <taxon>Cressdnaviricota</taxon>
        <taxon>Arfiviricetes</taxon>
        <taxon>Baphyvirales</taxon>
        <taxon>Bacilladnaviridae</taxon>
        <taxon>Kieseladnavirus</taxon>
    </lineage>
</organism>
<evidence type="ECO:0000305" key="1"/>
<keyword id="KW-1048">Host nucleus</keyword>
<keyword id="KW-1185">Reference proteome</keyword>
<keyword id="KW-0946">Virion</keyword>
<reference key="1">
    <citation type="journal article" date="2017" name="Virology">
        <title>Evolutionary history of ssDNA bacilladnaviruses features horizontal acquisition of the capsid gene from ssRNA nodaviruses.</title>
        <authorList>
            <person name="Kazlauskas D."/>
            <person name="Dayaram A."/>
            <person name="Kraberger S."/>
            <person name="Goldstien S."/>
            <person name="Varsani A."/>
            <person name="Krupovic M."/>
        </authorList>
    </citation>
    <scope>NUCLEOTIDE SEQUENCE [LARGE SCALE GENOMIC DNA]</scope>
    <source>
        <strain>AHEaBavV1</strain>
    </source>
</reference>
<name>CAPSD_AHEBV</name>
<accession>A0A1P8YT88</accession>